<feature type="chain" id="PRO_0000128108" description="Uncharacterized protein AF_2165">
    <location>
        <begin position="1"/>
        <end position="247"/>
    </location>
</feature>
<dbReference type="EMBL" id="AE000782">
    <property type="protein sequence ID" value="AAB89095.1"/>
    <property type="molecule type" value="Genomic_DNA"/>
</dbReference>
<dbReference type="PIR" id="E69520">
    <property type="entry name" value="E69520"/>
</dbReference>
<dbReference type="STRING" id="224325.AF_2165"/>
<dbReference type="PaxDb" id="224325-AF_2165"/>
<dbReference type="EnsemblBacteria" id="AAB89095">
    <property type="protein sequence ID" value="AAB89095"/>
    <property type="gene ID" value="AF_2165"/>
</dbReference>
<dbReference type="KEGG" id="afu:AF_2165"/>
<dbReference type="HOGENOM" id="CLU_1122575_0_0_2"/>
<dbReference type="Proteomes" id="UP000002199">
    <property type="component" value="Chromosome"/>
</dbReference>
<proteinExistence type="predicted"/>
<protein>
    <recommendedName>
        <fullName>Uncharacterized protein AF_2165</fullName>
    </recommendedName>
</protein>
<name>Y2165_ARCFU</name>
<gene>
    <name type="ordered locus">AF_2165</name>
</gene>
<organism>
    <name type="scientific">Archaeoglobus fulgidus (strain ATCC 49558 / DSM 4304 / JCM 9628 / NBRC 100126 / VC-16)</name>
    <dbReference type="NCBI Taxonomy" id="224325"/>
    <lineage>
        <taxon>Archaea</taxon>
        <taxon>Methanobacteriati</taxon>
        <taxon>Methanobacteriota</taxon>
        <taxon>Archaeoglobi</taxon>
        <taxon>Archaeoglobales</taxon>
        <taxon>Archaeoglobaceae</taxon>
        <taxon>Archaeoglobus</taxon>
    </lineage>
</organism>
<sequence>MDARQLHFHLGGCNFLRSALLRHATIQVLGGRRWFQLVQSGLLGMVVGVDNDQGAVFRAGDWWVKDNTNAAKNSMEKNWDPDVDDFGVVDNTNAVNQILRNYEAVFYSGHGNKEGGGYGKGECIVVKGTGKHPELWYCYHHAVYGLRTRLFVIQACYAANENPNSLANVLARKGVECVIGASGSIHDYDAFGLPTCRTWADVFWDHVTGNSDANYQKRTAHEARIEANSAAWFCDLDREVGNCNMYI</sequence>
<accession>O28117</accession>
<reference key="1">
    <citation type="journal article" date="1997" name="Nature">
        <title>The complete genome sequence of the hyperthermophilic, sulphate-reducing archaeon Archaeoglobus fulgidus.</title>
        <authorList>
            <person name="Klenk H.-P."/>
            <person name="Clayton R.A."/>
            <person name="Tomb J.-F."/>
            <person name="White O."/>
            <person name="Nelson K.E."/>
            <person name="Ketchum K.A."/>
            <person name="Dodson R.J."/>
            <person name="Gwinn M.L."/>
            <person name="Hickey E.K."/>
            <person name="Peterson J.D."/>
            <person name="Richardson D.L."/>
            <person name="Kerlavage A.R."/>
            <person name="Graham D.E."/>
            <person name="Kyrpides N.C."/>
            <person name="Fleischmann R.D."/>
            <person name="Quackenbush J."/>
            <person name="Lee N.H."/>
            <person name="Sutton G.G."/>
            <person name="Gill S.R."/>
            <person name="Kirkness E.F."/>
            <person name="Dougherty B.A."/>
            <person name="McKenney K."/>
            <person name="Adams M.D."/>
            <person name="Loftus B.J."/>
            <person name="Peterson S.N."/>
            <person name="Reich C.I."/>
            <person name="McNeil L.K."/>
            <person name="Badger J.H."/>
            <person name="Glodek A."/>
            <person name="Zhou L."/>
            <person name="Overbeek R."/>
            <person name="Gocayne J.D."/>
            <person name="Weidman J.F."/>
            <person name="McDonald L.A."/>
            <person name="Utterback T.R."/>
            <person name="Cotton M.D."/>
            <person name="Spriggs T."/>
            <person name="Artiach P."/>
            <person name="Kaine B.P."/>
            <person name="Sykes S.M."/>
            <person name="Sadow P.W."/>
            <person name="D'Andrea K.P."/>
            <person name="Bowman C."/>
            <person name="Fujii C."/>
            <person name="Garland S.A."/>
            <person name="Mason T.M."/>
            <person name="Olsen G.J."/>
            <person name="Fraser C.M."/>
            <person name="Smith H.O."/>
            <person name="Woese C.R."/>
            <person name="Venter J.C."/>
        </authorList>
    </citation>
    <scope>NUCLEOTIDE SEQUENCE [LARGE SCALE GENOMIC DNA]</scope>
    <source>
        <strain>ATCC 49558 / DSM 4304 / JCM 9628 / NBRC 100126 / VC-16</strain>
    </source>
</reference>
<keyword id="KW-1185">Reference proteome</keyword>